<keyword id="KW-0012">Acyltransferase</keyword>
<keyword id="KW-0963">Cytoplasm</keyword>
<keyword id="KW-0276">Fatty acid metabolism</keyword>
<keyword id="KW-0442">Lipid degradation</keyword>
<keyword id="KW-0443">Lipid metabolism</keyword>
<keyword id="KW-0808">Transferase</keyword>
<accession>A4WCW7</accession>
<feature type="chain" id="PRO_1000069500" description="3-ketoacyl-CoA thiolase">
    <location>
        <begin position="1"/>
        <end position="436"/>
    </location>
</feature>
<feature type="active site" description="Acyl-thioester intermediate" evidence="1">
    <location>
        <position position="99"/>
    </location>
</feature>
<feature type="active site" description="Proton acceptor" evidence="1">
    <location>
        <position position="392"/>
    </location>
</feature>
<feature type="active site" description="Proton acceptor" evidence="1">
    <location>
        <position position="422"/>
    </location>
</feature>
<reference key="1">
    <citation type="journal article" date="2010" name="PLoS Genet.">
        <title>Genome sequence of the plant growth promoting endophytic bacterium Enterobacter sp. 638.</title>
        <authorList>
            <person name="Taghavi S."/>
            <person name="van der Lelie D."/>
            <person name="Hoffman A."/>
            <person name="Zhang Y.B."/>
            <person name="Walla M.D."/>
            <person name="Vangronsveld J."/>
            <person name="Newman L."/>
            <person name="Monchy S."/>
        </authorList>
    </citation>
    <scope>NUCLEOTIDE SEQUENCE [LARGE SCALE GENOMIC DNA]</scope>
    <source>
        <strain>638</strain>
    </source>
</reference>
<sequence>MSQALPLVTRQGDRIAIVSGLRTPFARQATAFHGIPAVDLGKMVVGEMLARSEISPDVIEQLVFGQVVQMPEAPNVAREIVLGTGMSVHTDAYSVSRACATSFQAVANVAESLMTGTIRAGIAGGADSSSVLPIGVSKKLARVLVDVNKARTMGLRLKLFSQLRLRDLAPVPPAVAEYSTGLRMGDTAEQMAKTYGITREQQDALAHRSHQRAALAWSEGKLGDEVMTVYIPPFREPLSEDNNIRGTSTLADYAKLRPAFDRKHGTVTAANSTPLTDGAAAVILMTESRAKELGLVPLGYLRSYAFTAIDVWQDMLLGPAWSTPLALERAGLTLSDLTLIDMHEAFAAQTLANLQLLGSERFARDVLGRAHATGEVDESKFNVLGGSIAYGHPFAATGARMITQTLHELRRRGGGFGLVTACAAGGLGAAMVLEAE</sequence>
<dbReference type="EC" id="2.3.1.16" evidence="1"/>
<dbReference type="EMBL" id="CP000653">
    <property type="protein sequence ID" value="ABP61547.1"/>
    <property type="molecule type" value="Genomic_DNA"/>
</dbReference>
<dbReference type="RefSeq" id="WP_015959880.1">
    <property type="nucleotide sequence ID" value="NC_009436.1"/>
</dbReference>
<dbReference type="SMR" id="A4WCW7"/>
<dbReference type="STRING" id="399742.Ent638_2882"/>
<dbReference type="KEGG" id="ent:Ent638_2882"/>
<dbReference type="eggNOG" id="COG0183">
    <property type="taxonomic scope" value="Bacteria"/>
</dbReference>
<dbReference type="HOGENOM" id="CLU_031026_2_0_6"/>
<dbReference type="OrthoDB" id="8951704at2"/>
<dbReference type="UniPathway" id="UPA00659"/>
<dbReference type="Proteomes" id="UP000000230">
    <property type="component" value="Chromosome"/>
</dbReference>
<dbReference type="GO" id="GO:0005829">
    <property type="term" value="C:cytosol"/>
    <property type="evidence" value="ECO:0007669"/>
    <property type="project" value="TreeGrafter"/>
</dbReference>
<dbReference type="GO" id="GO:0003988">
    <property type="term" value="F:acetyl-CoA C-acyltransferase activity"/>
    <property type="evidence" value="ECO:0007669"/>
    <property type="project" value="UniProtKB-UniRule"/>
</dbReference>
<dbReference type="GO" id="GO:0006635">
    <property type="term" value="P:fatty acid beta-oxidation"/>
    <property type="evidence" value="ECO:0007669"/>
    <property type="project" value="UniProtKB-UniRule"/>
</dbReference>
<dbReference type="CDD" id="cd00751">
    <property type="entry name" value="thiolase"/>
    <property type="match status" value="1"/>
</dbReference>
<dbReference type="FunFam" id="3.40.47.10:FF:000011">
    <property type="entry name" value="3-ketoacyl-CoA thiolase"/>
    <property type="match status" value="1"/>
</dbReference>
<dbReference type="Gene3D" id="3.40.47.10">
    <property type="match status" value="1"/>
</dbReference>
<dbReference type="HAMAP" id="MF_01618">
    <property type="entry name" value="FadI"/>
    <property type="match status" value="1"/>
</dbReference>
<dbReference type="InterPro" id="IPR012806">
    <property type="entry name" value="Ac-CoA_C-AcTrfase_FadI"/>
</dbReference>
<dbReference type="InterPro" id="IPR002155">
    <property type="entry name" value="Thiolase"/>
</dbReference>
<dbReference type="InterPro" id="IPR016039">
    <property type="entry name" value="Thiolase-like"/>
</dbReference>
<dbReference type="InterPro" id="IPR020615">
    <property type="entry name" value="Thiolase_acyl_enz_int_AS"/>
</dbReference>
<dbReference type="InterPro" id="IPR020610">
    <property type="entry name" value="Thiolase_AS"/>
</dbReference>
<dbReference type="InterPro" id="IPR020617">
    <property type="entry name" value="Thiolase_C"/>
</dbReference>
<dbReference type="InterPro" id="IPR020613">
    <property type="entry name" value="Thiolase_CS"/>
</dbReference>
<dbReference type="InterPro" id="IPR020616">
    <property type="entry name" value="Thiolase_N"/>
</dbReference>
<dbReference type="NCBIfam" id="TIGR01930">
    <property type="entry name" value="AcCoA-C-Actrans"/>
    <property type="match status" value="1"/>
</dbReference>
<dbReference type="NCBIfam" id="TIGR02446">
    <property type="entry name" value="FadI"/>
    <property type="match status" value="1"/>
</dbReference>
<dbReference type="NCBIfam" id="NF006516">
    <property type="entry name" value="PRK08963.1"/>
    <property type="match status" value="1"/>
</dbReference>
<dbReference type="PANTHER" id="PTHR18919:SF107">
    <property type="entry name" value="ACETYL-COA ACETYLTRANSFERASE, CYTOSOLIC"/>
    <property type="match status" value="1"/>
</dbReference>
<dbReference type="PANTHER" id="PTHR18919">
    <property type="entry name" value="ACETYL-COA C-ACYLTRANSFERASE"/>
    <property type="match status" value="1"/>
</dbReference>
<dbReference type="Pfam" id="PF02803">
    <property type="entry name" value="Thiolase_C"/>
    <property type="match status" value="1"/>
</dbReference>
<dbReference type="Pfam" id="PF00108">
    <property type="entry name" value="Thiolase_N"/>
    <property type="match status" value="1"/>
</dbReference>
<dbReference type="PIRSF" id="PIRSF000429">
    <property type="entry name" value="Ac-CoA_Ac_transf"/>
    <property type="match status" value="1"/>
</dbReference>
<dbReference type="SUPFAM" id="SSF53901">
    <property type="entry name" value="Thiolase-like"/>
    <property type="match status" value="2"/>
</dbReference>
<dbReference type="PROSITE" id="PS00098">
    <property type="entry name" value="THIOLASE_1"/>
    <property type="match status" value="1"/>
</dbReference>
<dbReference type="PROSITE" id="PS00737">
    <property type="entry name" value="THIOLASE_2"/>
    <property type="match status" value="1"/>
</dbReference>
<dbReference type="PROSITE" id="PS00099">
    <property type="entry name" value="THIOLASE_3"/>
    <property type="match status" value="1"/>
</dbReference>
<proteinExistence type="inferred from homology"/>
<name>FADI_ENT38</name>
<comment type="function">
    <text evidence="1">Catalyzes the final step of fatty acid oxidation in which acetyl-CoA is released and the CoA ester of a fatty acid two carbons shorter is formed.</text>
</comment>
<comment type="catalytic activity">
    <reaction evidence="1">
        <text>an acyl-CoA + acetyl-CoA = a 3-oxoacyl-CoA + CoA</text>
        <dbReference type="Rhea" id="RHEA:21564"/>
        <dbReference type="ChEBI" id="CHEBI:57287"/>
        <dbReference type="ChEBI" id="CHEBI:57288"/>
        <dbReference type="ChEBI" id="CHEBI:58342"/>
        <dbReference type="ChEBI" id="CHEBI:90726"/>
        <dbReference type="EC" id="2.3.1.16"/>
    </reaction>
</comment>
<comment type="pathway">
    <text evidence="1">Lipid metabolism; fatty acid beta-oxidation.</text>
</comment>
<comment type="subunit">
    <text evidence="1">Heterotetramer of two alpha chains (FadJ) and two beta chains (FadI).</text>
</comment>
<comment type="subcellular location">
    <subcellularLocation>
        <location evidence="1">Cytoplasm</location>
    </subcellularLocation>
</comment>
<comment type="similarity">
    <text evidence="1">Belongs to the thiolase-like superfamily. Thiolase family.</text>
</comment>
<protein>
    <recommendedName>
        <fullName evidence="1">3-ketoacyl-CoA thiolase</fullName>
        <ecNumber evidence="1">2.3.1.16</ecNumber>
    </recommendedName>
    <alternativeName>
        <fullName evidence="1">ACSs</fullName>
    </alternativeName>
    <alternativeName>
        <fullName evidence="1">Acetyl-CoA acyltransferase</fullName>
    </alternativeName>
    <alternativeName>
        <fullName evidence="1">Acyl-CoA ligase</fullName>
    </alternativeName>
    <alternativeName>
        <fullName evidence="1">Beta-ketothiolase</fullName>
    </alternativeName>
    <alternativeName>
        <fullName evidence="1">Fatty acid oxidation complex subunit beta</fullName>
    </alternativeName>
</protein>
<gene>
    <name evidence="1" type="primary">fadI</name>
    <name type="ordered locus">Ent638_2882</name>
</gene>
<organism>
    <name type="scientific">Enterobacter sp. (strain 638)</name>
    <dbReference type="NCBI Taxonomy" id="399742"/>
    <lineage>
        <taxon>Bacteria</taxon>
        <taxon>Pseudomonadati</taxon>
        <taxon>Pseudomonadota</taxon>
        <taxon>Gammaproteobacteria</taxon>
        <taxon>Enterobacterales</taxon>
        <taxon>Enterobacteriaceae</taxon>
        <taxon>Enterobacter</taxon>
    </lineage>
</organism>
<evidence type="ECO:0000255" key="1">
    <source>
        <dbReference type="HAMAP-Rule" id="MF_01618"/>
    </source>
</evidence>